<feature type="chain" id="PRO_0000321621" description="Octanoyltransferase">
    <location>
        <begin position="1"/>
        <end position="215"/>
    </location>
</feature>
<feature type="domain" description="BPL/LPL catalytic" evidence="2">
    <location>
        <begin position="35"/>
        <end position="210"/>
    </location>
</feature>
<feature type="active site" description="Acyl-thioester intermediate" evidence="1">
    <location>
        <position position="172"/>
    </location>
</feature>
<feature type="binding site" evidence="1">
    <location>
        <begin position="74"/>
        <end position="81"/>
    </location>
    <ligand>
        <name>substrate</name>
    </ligand>
</feature>
<feature type="binding site" evidence="1">
    <location>
        <begin position="141"/>
        <end position="143"/>
    </location>
    <ligand>
        <name>substrate</name>
    </ligand>
</feature>
<feature type="binding site" evidence="1">
    <location>
        <begin position="154"/>
        <end position="156"/>
    </location>
    <ligand>
        <name>substrate</name>
    </ligand>
</feature>
<feature type="site" description="Lowers pKa of active site Cys" evidence="1">
    <location>
        <position position="138"/>
    </location>
</feature>
<proteinExistence type="inferred from homology"/>
<name>LIPB_ALKEH</name>
<keyword id="KW-0012">Acyltransferase</keyword>
<keyword id="KW-0963">Cytoplasm</keyword>
<keyword id="KW-1185">Reference proteome</keyword>
<keyword id="KW-0808">Transferase</keyword>
<protein>
    <recommendedName>
        <fullName evidence="1">Octanoyltransferase</fullName>
        <ecNumber evidence="1">2.3.1.181</ecNumber>
    </recommendedName>
    <alternativeName>
        <fullName evidence="1">Lipoate-protein ligase B</fullName>
    </alternativeName>
    <alternativeName>
        <fullName evidence="1">Lipoyl/octanoyl transferase</fullName>
    </alternativeName>
    <alternativeName>
        <fullName evidence="1">Octanoyl-[acyl-carrier-protein]-protein N-octanoyltransferase</fullName>
    </alternativeName>
</protein>
<accession>Q0ACA3</accession>
<dbReference type="EC" id="2.3.1.181" evidence="1"/>
<dbReference type="EMBL" id="CP000453">
    <property type="protein sequence ID" value="ABI55534.1"/>
    <property type="molecule type" value="Genomic_DNA"/>
</dbReference>
<dbReference type="RefSeq" id="WP_011627930.1">
    <property type="nucleotide sequence ID" value="NC_008340.1"/>
</dbReference>
<dbReference type="SMR" id="Q0ACA3"/>
<dbReference type="KEGG" id="aeh:Mlg_0179"/>
<dbReference type="eggNOG" id="COG0321">
    <property type="taxonomic scope" value="Bacteria"/>
</dbReference>
<dbReference type="HOGENOM" id="CLU_035168_3_1_6"/>
<dbReference type="OrthoDB" id="9787061at2"/>
<dbReference type="UniPathway" id="UPA00538">
    <property type="reaction ID" value="UER00592"/>
</dbReference>
<dbReference type="Proteomes" id="UP000001962">
    <property type="component" value="Chromosome"/>
</dbReference>
<dbReference type="GO" id="GO:0005737">
    <property type="term" value="C:cytoplasm"/>
    <property type="evidence" value="ECO:0007669"/>
    <property type="project" value="UniProtKB-SubCell"/>
</dbReference>
<dbReference type="GO" id="GO:0033819">
    <property type="term" value="F:lipoyl(octanoyl) transferase activity"/>
    <property type="evidence" value="ECO:0007669"/>
    <property type="project" value="UniProtKB-EC"/>
</dbReference>
<dbReference type="GO" id="GO:0036211">
    <property type="term" value="P:protein modification process"/>
    <property type="evidence" value="ECO:0007669"/>
    <property type="project" value="InterPro"/>
</dbReference>
<dbReference type="CDD" id="cd16444">
    <property type="entry name" value="LipB"/>
    <property type="match status" value="1"/>
</dbReference>
<dbReference type="FunFam" id="3.30.930.10:FF:000020">
    <property type="entry name" value="Octanoyltransferase"/>
    <property type="match status" value="1"/>
</dbReference>
<dbReference type="Gene3D" id="3.30.930.10">
    <property type="entry name" value="Bira Bifunctional Protein, Domain 2"/>
    <property type="match status" value="1"/>
</dbReference>
<dbReference type="HAMAP" id="MF_00013">
    <property type="entry name" value="LipB"/>
    <property type="match status" value="1"/>
</dbReference>
<dbReference type="InterPro" id="IPR045864">
    <property type="entry name" value="aa-tRNA-synth_II/BPL/LPL"/>
</dbReference>
<dbReference type="InterPro" id="IPR004143">
    <property type="entry name" value="BPL_LPL_catalytic"/>
</dbReference>
<dbReference type="InterPro" id="IPR000544">
    <property type="entry name" value="Octanoyltransferase"/>
</dbReference>
<dbReference type="InterPro" id="IPR020605">
    <property type="entry name" value="Octanoyltransferase_CS"/>
</dbReference>
<dbReference type="NCBIfam" id="TIGR00214">
    <property type="entry name" value="lipB"/>
    <property type="match status" value="1"/>
</dbReference>
<dbReference type="NCBIfam" id="NF010922">
    <property type="entry name" value="PRK14342.1"/>
    <property type="match status" value="1"/>
</dbReference>
<dbReference type="PANTHER" id="PTHR10993:SF7">
    <property type="entry name" value="LIPOYLTRANSFERASE 2, MITOCHONDRIAL-RELATED"/>
    <property type="match status" value="1"/>
</dbReference>
<dbReference type="PANTHER" id="PTHR10993">
    <property type="entry name" value="OCTANOYLTRANSFERASE"/>
    <property type="match status" value="1"/>
</dbReference>
<dbReference type="Pfam" id="PF21948">
    <property type="entry name" value="LplA-B_cat"/>
    <property type="match status" value="1"/>
</dbReference>
<dbReference type="PIRSF" id="PIRSF016262">
    <property type="entry name" value="LPLase"/>
    <property type="match status" value="1"/>
</dbReference>
<dbReference type="SUPFAM" id="SSF55681">
    <property type="entry name" value="Class II aaRS and biotin synthetases"/>
    <property type="match status" value="1"/>
</dbReference>
<dbReference type="PROSITE" id="PS51733">
    <property type="entry name" value="BPL_LPL_CATALYTIC"/>
    <property type="match status" value="1"/>
</dbReference>
<dbReference type="PROSITE" id="PS01313">
    <property type="entry name" value="LIPB"/>
    <property type="match status" value="1"/>
</dbReference>
<reference key="1">
    <citation type="submission" date="2006-08" db="EMBL/GenBank/DDBJ databases">
        <title>Complete sequence of Alkalilimnicola ehrilichei MLHE-1.</title>
        <authorList>
            <person name="Copeland A."/>
            <person name="Lucas S."/>
            <person name="Lapidus A."/>
            <person name="Barry K."/>
            <person name="Detter J.C."/>
            <person name="Glavina del Rio T."/>
            <person name="Hammon N."/>
            <person name="Israni S."/>
            <person name="Dalin E."/>
            <person name="Tice H."/>
            <person name="Pitluck S."/>
            <person name="Sims D."/>
            <person name="Brettin T."/>
            <person name="Bruce D."/>
            <person name="Han C."/>
            <person name="Tapia R."/>
            <person name="Gilna P."/>
            <person name="Schmutz J."/>
            <person name="Larimer F."/>
            <person name="Land M."/>
            <person name="Hauser L."/>
            <person name="Kyrpides N."/>
            <person name="Mikhailova N."/>
            <person name="Oremland R.S."/>
            <person name="Hoeft S.E."/>
            <person name="Switzer-Blum J."/>
            <person name="Kulp T."/>
            <person name="King G."/>
            <person name="Tabita R."/>
            <person name="Witte B."/>
            <person name="Santini J.M."/>
            <person name="Basu P."/>
            <person name="Hollibaugh J.T."/>
            <person name="Xie G."/>
            <person name="Stolz J.F."/>
            <person name="Richardson P."/>
        </authorList>
    </citation>
    <scope>NUCLEOTIDE SEQUENCE [LARGE SCALE GENOMIC DNA]</scope>
    <source>
        <strain>ATCC BAA-1101 / DSM 17681 / MLHE-1</strain>
    </source>
</reference>
<gene>
    <name evidence="1" type="primary">lipB</name>
    <name type="ordered locus">Mlg_0179</name>
</gene>
<evidence type="ECO:0000255" key="1">
    <source>
        <dbReference type="HAMAP-Rule" id="MF_00013"/>
    </source>
</evidence>
<evidence type="ECO:0000255" key="2">
    <source>
        <dbReference type="PROSITE-ProRule" id="PRU01067"/>
    </source>
</evidence>
<comment type="function">
    <text evidence="1">Catalyzes the transfer of endogenously produced octanoic acid from octanoyl-acyl-carrier-protein onto the lipoyl domains of lipoate-dependent enzymes. Lipoyl-ACP can also act as a substrate although octanoyl-ACP is likely to be the physiological substrate.</text>
</comment>
<comment type="catalytic activity">
    <reaction evidence="1">
        <text>octanoyl-[ACP] + L-lysyl-[protein] = N(6)-octanoyl-L-lysyl-[protein] + holo-[ACP] + H(+)</text>
        <dbReference type="Rhea" id="RHEA:17665"/>
        <dbReference type="Rhea" id="RHEA-COMP:9636"/>
        <dbReference type="Rhea" id="RHEA-COMP:9685"/>
        <dbReference type="Rhea" id="RHEA-COMP:9752"/>
        <dbReference type="Rhea" id="RHEA-COMP:9928"/>
        <dbReference type="ChEBI" id="CHEBI:15378"/>
        <dbReference type="ChEBI" id="CHEBI:29969"/>
        <dbReference type="ChEBI" id="CHEBI:64479"/>
        <dbReference type="ChEBI" id="CHEBI:78463"/>
        <dbReference type="ChEBI" id="CHEBI:78809"/>
        <dbReference type="EC" id="2.3.1.181"/>
    </reaction>
</comment>
<comment type="pathway">
    <text evidence="1">Protein modification; protein lipoylation via endogenous pathway; protein N(6)-(lipoyl)lysine from octanoyl-[acyl-carrier-protein]: step 1/2.</text>
</comment>
<comment type="subcellular location">
    <subcellularLocation>
        <location evidence="1">Cytoplasm</location>
    </subcellularLocation>
</comment>
<comment type="miscellaneous">
    <text evidence="1">In the reaction, the free carboxyl group of octanoic acid is attached via an amide linkage to the epsilon-amino group of a specific lysine residue of lipoyl domains of lipoate-dependent enzymes.</text>
</comment>
<comment type="similarity">
    <text evidence="1">Belongs to the LipB family.</text>
</comment>
<sequence>MPPSPLTDIQVRYLGRRDYRETWSAMRRYTDERGPDTPDQLWVVSHPPVYTLGQAGRREHILDPGEIPVVETDRGGQVTYHGPGQIVLYPLLDLRRWGLGVRSLVSALEHTVISLLAGYGIASEARDDAPGVYVEGRKVASVGLRVRRGCSYHGLAVNVDVDLEPFLRINPCGYPGLEVTRLLDLGVPTPYERLEADLALHCLEAIVEYGNGGAA</sequence>
<organism>
    <name type="scientific">Alkalilimnicola ehrlichii (strain ATCC BAA-1101 / DSM 17681 / MLHE-1)</name>
    <dbReference type="NCBI Taxonomy" id="187272"/>
    <lineage>
        <taxon>Bacteria</taxon>
        <taxon>Pseudomonadati</taxon>
        <taxon>Pseudomonadota</taxon>
        <taxon>Gammaproteobacteria</taxon>
        <taxon>Chromatiales</taxon>
        <taxon>Ectothiorhodospiraceae</taxon>
        <taxon>Alkalilimnicola</taxon>
    </lineage>
</organism>